<gene>
    <name evidence="1" type="primary">glpB</name>
    <name type="ordered locus">ECA4164</name>
</gene>
<comment type="function">
    <text evidence="1">Conversion of glycerol 3-phosphate to dihydroxyacetone. Uses fumarate or nitrate as electron acceptor.</text>
</comment>
<comment type="catalytic activity">
    <reaction evidence="1">
        <text>a quinone + sn-glycerol 3-phosphate = dihydroxyacetone phosphate + a quinol</text>
        <dbReference type="Rhea" id="RHEA:18977"/>
        <dbReference type="ChEBI" id="CHEBI:24646"/>
        <dbReference type="ChEBI" id="CHEBI:57597"/>
        <dbReference type="ChEBI" id="CHEBI:57642"/>
        <dbReference type="ChEBI" id="CHEBI:132124"/>
        <dbReference type="EC" id="1.1.5.3"/>
    </reaction>
</comment>
<comment type="cofactor">
    <cofactor evidence="1">
        <name>FMN</name>
        <dbReference type="ChEBI" id="CHEBI:58210"/>
    </cofactor>
</comment>
<comment type="pathway">
    <text evidence="1">Polyol metabolism; glycerol degradation via glycerol kinase pathway; glycerone phosphate from sn-glycerol 3-phosphate (anaerobic route): step 1/1.</text>
</comment>
<comment type="subunit">
    <text evidence="1">Composed of a catalytic GlpA/B dimer and of membrane bound GlpC.</text>
</comment>
<comment type="similarity">
    <text evidence="1">Belongs to the anaerobic G-3-P dehydrogenase subunit B family.</text>
</comment>
<accession>Q6CZI7</accession>
<name>GLPB_PECAS</name>
<organism>
    <name type="scientific">Pectobacterium atrosepticum (strain SCRI 1043 / ATCC BAA-672)</name>
    <name type="common">Erwinia carotovora subsp. atroseptica</name>
    <dbReference type="NCBI Taxonomy" id="218491"/>
    <lineage>
        <taxon>Bacteria</taxon>
        <taxon>Pseudomonadati</taxon>
        <taxon>Pseudomonadota</taxon>
        <taxon>Gammaproteobacteria</taxon>
        <taxon>Enterobacterales</taxon>
        <taxon>Pectobacteriaceae</taxon>
        <taxon>Pectobacterium</taxon>
    </lineage>
</organism>
<sequence>MRYDVVIIGGGLAGLTCGIRLAEQGKRCAIVSAGQNALHFSSGALDLLSHLPDGQPVSQPLDALDELARQAPHHPYSRMGAAAVAALLPQVEALLERSNISLLGNHQQNHWRMTPLGKFRACWLSPADGVTRGLADSHFGDNPLIAGIEGFLDFQSRIVAGTLQTQGIAARSDELKLPVLDRLRQNPSEFRAVNIARLLDRPENRSALVEELSLLANGNDAIIMPACLGLDSPEIVSELADALGKPVLLLPTLPPSVLGLRLHQALSQRFRQLGGMVMPGDRAVRASLSSQEIAVHSHHHRDIPLRAKHAVLASGSFFSNGLVTQFDRVTEPVFGLDVRFAEQREGWSQQDVFAPQPYMQFGAIVDEHLHPRIAGETVNNLYAIGAVLEGFDPIVQGCGAGVSLLSALHVAEQILKEGNP</sequence>
<reference key="1">
    <citation type="journal article" date="2004" name="Proc. Natl. Acad. Sci. U.S.A.">
        <title>Genome sequence of the enterobacterial phytopathogen Erwinia carotovora subsp. atroseptica and characterization of virulence factors.</title>
        <authorList>
            <person name="Bell K.S."/>
            <person name="Sebaihia M."/>
            <person name="Pritchard L."/>
            <person name="Holden M.T.G."/>
            <person name="Hyman L.J."/>
            <person name="Holeva M.C."/>
            <person name="Thomson N.R."/>
            <person name="Bentley S.D."/>
            <person name="Churcher L.J.C."/>
            <person name="Mungall K."/>
            <person name="Atkin R."/>
            <person name="Bason N."/>
            <person name="Brooks K."/>
            <person name="Chillingworth T."/>
            <person name="Clark K."/>
            <person name="Doggett J."/>
            <person name="Fraser A."/>
            <person name="Hance Z."/>
            <person name="Hauser H."/>
            <person name="Jagels K."/>
            <person name="Moule S."/>
            <person name="Norbertczak H."/>
            <person name="Ormond D."/>
            <person name="Price C."/>
            <person name="Quail M.A."/>
            <person name="Sanders M."/>
            <person name="Walker D."/>
            <person name="Whitehead S."/>
            <person name="Salmond G.P.C."/>
            <person name="Birch P.R.J."/>
            <person name="Parkhill J."/>
            <person name="Toth I.K."/>
        </authorList>
    </citation>
    <scope>NUCLEOTIDE SEQUENCE [LARGE SCALE GENOMIC DNA]</scope>
    <source>
        <strain>SCRI 1043 / ATCC BAA-672</strain>
    </source>
</reference>
<protein>
    <recommendedName>
        <fullName evidence="1">Anaerobic glycerol-3-phosphate dehydrogenase subunit B</fullName>
        <shortName evidence="1">Anaerobic G-3-P dehydrogenase subunit B</shortName>
        <shortName evidence="1">Anaerobic G3Pdhase B</shortName>
        <ecNumber evidence="1">1.1.5.3</ecNumber>
    </recommendedName>
</protein>
<dbReference type="EC" id="1.1.5.3" evidence="1"/>
<dbReference type="EMBL" id="BX950851">
    <property type="protein sequence ID" value="CAG77061.1"/>
    <property type="molecule type" value="Genomic_DNA"/>
</dbReference>
<dbReference type="RefSeq" id="WP_011095635.1">
    <property type="nucleotide sequence ID" value="NC_004547.2"/>
</dbReference>
<dbReference type="STRING" id="218491.ECA4164"/>
<dbReference type="KEGG" id="eca:ECA4164"/>
<dbReference type="PATRIC" id="fig|218491.5.peg.4236"/>
<dbReference type="eggNOG" id="COG3075">
    <property type="taxonomic scope" value="Bacteria"/>
</dbReference>
<dbReference type="HOGENOM" id="CLU_047793_0_0_6"/>
<dbReference type="OrthoDB" id="6395323at2"/>
<dbReference type="UniPathway" id="UPA00618">
    <property type="reaction ID" value="UER00673"/>
</dbReference>
<dbReference type="Proteomes" id="UP000007966">
    <property type="component" value="Chromosome"/>
</dbReference>
<dbReference type="GO" id="GO:0009331">
    <property type="term" value="C:glycerol-3-phosphate dehydrogenase (FAD) complex"/>
    <property type="evidence" value="ECO:0007669"/>
    <property type="project" value="InterPro"/>
</dbReference>
<dbReference type="GO" id="GO:0004368">
    <property type="term" value="F:glycerol-3-phosphate dehydrogenase (quinone) activity"/>
    <property type="evidence" value="ECO:0007669"/>
    <property type="project" value="UniProtKB-UniRule"/>
</dbReference>
<dbReference type="GO" id="GO:0019563">
    <property type="term" value="P:glycerol catabolic process"/>
    <property type="evidence" value="ECO:0007669"/>
    <property type="project" value="UniProtKB-UniRule"/>
</dbReference>
<dbReference type="Gene3D" id="3.50.50.60">
    <property type="entry name" value="FAD/NAD(P)-binding domain"/>
    <property type="match status" value="1"/>
</dbReference>
<dbReference type="HAMAP" id="MF_00753">
    <property type="entry name" value="Glycerol3P_GlpB"/>
    <property type="match status" value="1"/>
</dbReference>
<dbReference type="InterPro" id="IPR003953">
    <property type="entry name" value="FAD-dep_OxRdtase_2_FAD-bd"/>
</dbReference>
<dbReference type="InterPro" id="IPR036188">
    <property type="entry name" value="FAD/NAD-bd_sf"/>
</dbReference>
<dbReference type="InterPro" id="IPR009158">
    <property type="entry name" value="G3P_DH_GlpB_su"/>
</dbReference>
<dbReference type="NCBIfam" id="TIGR03378">
    <property type="entry name" value="glycerol3P_GlpB"/>
    <property type="match status" value="1"/>
</dbReference>
<dbReference type="NCBIfam" id="NF003718">
    <property type="entry name" value="PRK05329.1-1"/>
    <property type="match status" value="1"/>
</dbReference>
<dbReference type="NCBIfam" id="NF003719">
    <property type="entry name" value="PRK05329.1-2"/>
    <property type="match status" value="1"/>
</dbReference>
<dbReference type="NCBIfam" id="NF003720">
    <property type="entry name" value="PRK05329.1-3"/>
    <property type="match status" value="1"/>
</dbReference>
<dbReference type="NCBIfam" id="NF003721">
    <property type="entry name" value="PRK05329.1-4"/>
    <property type="match status" value="1"/>
</dbReference>
<dbReference type="PANTHER" id="PTHR43734:SF7">
    <property type="entry name" value="4,4'-DIAPONEUROSPORENE OXYGENASE"/>
    <property type="match status" value="1"/>
</dbReference>
<dbReference type="PANTHER" id="PTHR43734">
    <property type="entry name" value="PHYTOENE DESATURASE"/>
    <property type="match status" value="1"/>
</dbReference>
<dbReference type="Pfam" id="PF00890">
    <property type="entry name" value="FAD_binding_2"/>
    <property type="match status" value="1"/>
</dbReference>
<dbReference type="PIRSF" id="PIRSF000141">
    <property type="entry name" value="Anaerobic_G3P_dh"/>
    <property type="match status" value="1"/>
</dbReference>
<dbReference type="PRINTS" id="PR00411">
    <property type="entry name" value="PNDRDTASEI"/>
</dbReference>
<dbReference type="SUPFAM" id="SSF51905">
    <property type="entry name" value="FAD/NAD(P)-binding domain"/>
    <property type="match status" value="1"/>
</dbReference>
<keyword id="KW-0285">Flavoprotein</keyword>
<keyword id="KW-0288">FMN</keyword>
<keyword id="KW-0560">Oxidoreductase</keyword>
<keyword id="KW-1185">Reference proteome</keyword>
<proteinExistence type="inferred from homology"/>
<evidence type="ECO:0000255" key="1">
    <source>
        <dbReference type="HAMAP-Rule" id="MF_00753"/>
    </source>
</evidence>
<feature type="chain" id="PRO_0000258899" description="Anaerobic glycerol-3-phosphate dehydrogenase subunit B">
    <location>
        <begin position="1"/>
        <end position="420"/>
    </location>
</feature>